<comment type="function">
    <text evidence="2">As part of the Ragulator complex it is involved in amino acid sensing and activation of mTORC1, a signaling complex promoting cell growth in response to growth factors, energy levels, and amino acids. Activated by amino acids through a mechanism involving the lysosomal V-ATPase, the Ragulator plays a dual role for the small GTPases Rag (RagA/RRAGA, RagB/RRAGB, RagC/RRAGC and/or RagD/RRAGD): it (1) acts as a guanine nucleotide exchange factor (GEF), activating the small GTPases Rag and (2) mediates recruitment of Rag GTPases to the lysosome membrane. Activated Ragulator and Rag GTPases function as a scaffold recruiting mTORC1 to lysosomes where it is in turn activated.</text>
</comment>
<comment type="subunit">
    <text evidence="1 2">Part of the Ragulator complex composed of lamtor1, lamtor2, lamtor3, lamtor4 and lamtor5. The Ragulator complex interacts with slc38a9; the probable amino acid sensor. Component of the lysosomal folliculin complex (LFC).</text>
</comment>
<comment type="subcellular location">
    <subcellularLocation>
        <location evidence="1">Late endosome membrane</location>
        <topology evidence="1">Peripheral membrane protein</topology>
        <orientation evidence="1">Cytoplasmic side</orientation>
    </subcellularLocation>
    <text evidence="1">Recruited to lysosome and endosome membranes by LAMTOR1.</text>
</comment>
<comment type="similarity">
    <text evidence="3">Belongs to the LAMTOR3 family.</text>
</comment>
<reference key="1">
    <citation type="journal article" date="2004" name="Nature">
        <title>Genome duplication in the teleost fish Tetraodon nigroviridis reveals the early vertebrate proto-karyotype.</title>
        <authorList>
            <person name="Jaillon O."/>
            <person name="Aury J.-M."/>
            <person name="Brunet F."/>
            <person name="Petit J.-L."/>
            <person name="Stange-Thomann N."/>
            <person name="Mauceli E."/>
            <person name="Bouneau L."/>
            <person name="Fischer C."/>
            <person name="Ozouf-Costaz C."/>
            <person name="Bernot A."/>
            <person name="Nicaud S."/>
            <person name="Jaffe D."/>
            <person name="Fisher S."/>
            <person name="Lutfalla G."/>
            <person name="Dossat C."/>
            <person name="Segurens B."/>
            <person name="Dasilva C."/>
            <person name="Salanoubat M."/>
            <person name="Levy M."/>
            <person name="Boudet N."/>
            <person name="Castellano S."/>
            <person name="Anthouard V."/>
            <person name="Jubin C."/>
            <person name="Castelli V."/>
            <person name="Katinka M."/>
            <person name="Vacherie B."/>
            <person name="Biemont C."/>
            <person name="Skalli Z."/>
            <person name="Cattolico L."/>
            <person name="Poulain J."/>
            <person name="De Berardinis V."/>
            <person name="Cruaud C."/>
            <person name="Duprat S."/>
            <person name="Brottier P."/>
            <person name="Coutanceau J.-P."/>
            <person name="Gouzy J."/>
            <person name="Parra G."/>
            <person name="Lardier G."/>
            <person name="Chapple C."/>
            <person name="McKernan K.J."/>
            <person name="McEwan P."/>
            <person name="Bosak S."/>
            <person name="Kellis M."/>
            <person name="Volff J.-N."/>
            <person name="Guigo R."/>
            <person name="Zody M.C."/>
            <person name="Mesirov J."/>
            <person name="Lindblad-Toh K."/>
            <person name="Birren B."/>
            <person name="Nusbaum C."/>
            <person name="Kahn D."/>
            <person name="Robinson-Rechavi M."/>
            <person name="Laudet V."/>
            <person name="Schachter V."/>
            <person name="Quetier F."/>
            <person name="Saurin W."/>
            <person name="Scarpelli C."/>
            <person name="Wincker P."/>
            <person name="Lander E.S."/>
            <person name="Weissenbach J."/>
            <person name="Roest Crollius H."/>
        </authorList>
    </citation>
    <scope>NUCLEOTIDE SEQUENCE [LARGE SCALE GENOMIC DNA]</scope>
</reference>
<name>LTOR3_TETNG</name>
<evidence type="ECO:0000250" key="1">
    <source>
        <dbReference type="UniProtKB" id="O88653"/>
    </source>
</evidence>
<evidence type="ECO:0000250" key="2">
    <source>
        <dbReference type="UniProtKB" id="Q9UHA4"/>
    </source>
</evidence>
<evidence type="ECO:0000305" key="3"/>
<sequence>MADDLKRYLYKQLQSVEGLHAIVVTDRDGVPVVKVANDNAPVPALRPGFLSTFALATDQGSKLGLSKNKSIICYYNDYQIVQFNRLPLVISFIARSSANTGLIMSLENELAPLIEELKQVVEVT</sequence>
<protein>
    <recommendedName>
        <fullName>Ragulator complex protein LAMTOR3</fullName>
    </recommendedName>
    <alternativeName>
        <fullName>Late endosomal/lysosomal adaptor and MAPK and MTOR activator 3</fullName>
    </alternativeName>
</protein>
<dbReference type="EMBL" id="CAAE01014454">
    <property type="protein sequence ID" value="CAF96427.1"/>
    <property type="molecule type" value="Genomic_DNA"/>
</dbReference>
<dbReference type="SMR" id="Q4SSF5"/>
<dbReference type="FunCoup" id="Q4SSF5">
    <property type="interactions" value="1135"/>
</dbReference>
<dbReference type="STRING" id="99883.ENSTNIP00000009796"/>
<dbReference type="Ensembl" id="ENSTNIT00000009974.1">
    <property type="protein sequence ID" value="ENSTNIP00000009796.1"/>
    <property type="gene ID" value="ENSTNIG00000006997.1"/>
</dbReference>
<dbReference type="KEGG" id="tng:GSTEN00013453G001"/>
<dbReference type="GeneTree" id="ENSGT00390000013159"/>
<dbReference type="HOGENOM" id="CLU_134641_0_0_1"/>
<dbReference type="InParanoid" id="Q4SSF5"/>
<dbReference type="OMA" id="YQVIQMN"/>
<dbReference type="OrthoDB" id="343907at2759"/>
<dbReference type="TreeFam" id="TF324889"/>
<dbReference type="Proteomes" id="UP000007303">
    <property type="component" value="Unassembled WGS sequence"/>
</dbReference>
<dbReference type="GO" id="GO:0031902">
    <property type="term" value="C:late endosome membrane"/>
    <property type="evidence" value="ECO:0007669"/>
    <property type="project" value="UniProtKB-SubCell"/>
</dbReference>
<dbReference type="GO" id="GO:0005765">
    <property type="term" value="C:lysosomal membrane"/>
    <property type="evidence" value="ECO:0000250"/>
    <property type="project" value="UniProtKB"/>
</dbReference>
<dbReference type="GO" id="GO:0071986">
    <property type="term" value="C:Ragulator complex"/>
    <property type="evidence" value="ECO:0000250"/>
    <property type="project" value="UniProtKB"/>
</dbReference>
<dbReference type="GO" id="GO:0071230">
    <property type="term" value="P:cellular response to amino acid stimulus"/>
    <property type="evidence" value="ECO:0000250"/>
    <property type="project" value="UniProtKB"/>
</dbReference>
<dbReference type="GO" id="GO:0032008">
    <property type="term" value="P:positive regulation of TOR signaling"/>
    <property type="evidence" value="ECO:0000250"/>
    <property type="project" value="UniProtKB"/>
</dbReference>
<dbReference type="GO" id="GO:1904263">
    <property type="term" value="P:positive regulation of TORC1 signaling"/>
    <property type="evidence" value="ECO:0000250"/>
    <property type="project" value="UniProtKB"/>
</dbReference>
<dbReference type="GO" id="GO:0008104">
    <property type="term" value="P:protein localization"/>
    <property type="evidence" value="ECO:0000250"/>
    <property type="project" value="UniProtKB"/>
</dbReference>
<dbReference type="FunFam" id="3.30.450.30:FF:000003">
    <property type="entry name" value="ragulator complex protein LAMTOR3 homolog"/>
    <property type="match status" value="1"/>
</dbReference>
<dbReference type="Gene3D" id="3.30.450.30">
    <property type="entry name" value="Dynein light chain 2a, cytoplasmic"/>
    <property type="match status" value="1"/>
</dbReference>
<dbReference type="InterPro" id="IPR015019">
    <property type="entry name" value="LAMTOR3"/>
</dbReference>
<dbReference type="PANTHER" id="PTHR13378:SF1">
    <property type="entry name" value="RAGULATOR COMPLEX PROTEIN LAMTOR3"/>
    <property type="match status" value="1"/>
</dbReference>
<dbReference type="PANTHER" id="PTHR13378">
    <property type="entry name" value="REGULATOR COMPLEX PROTEIN LAMTOR3"/>
    <property type="match status" value="1"/>
</dbReference>
<dbReference type="Pfam" id="PF08923">
    <property type="entry name" value="MAPKK1_Int"/>
    <property type="match status" value="1"/>
</dbReference>
<dbReference type="SMART" id="SM01278">
    <property type="entry name" value="MAPKK1_Int"/>
    <property type="match status" value="1"/>
</dbReference>
<dbReference type="SUPFAM" id="SSF103196">
    <property type="entry name" value="Roadblock/LC7 domain"/>
    <property type="match status" value="1"/>
</dbReference>
<proteinExistence type="inferred from homology"/>
<keyword id="KW-0967">Endosome</keyword>
<keyword id="KW-0472">Membrane</keyword>
<keyword id="KW-1185">Reference proteome</keyword>
<feature type="chain" id="PRO_0000356164" description="Ragulator complex protein LAMTOR3">
    <location>
        <begin position="1"/>
        <end position="124"/>
    </location>
</feature>
<gene>
    <name type="primary">lamtor3</name>
    <name type="ORF">GSTENG00013453001</name>
</gene>
<accession>Q4SSF5</accession>
<organism>
    <name type="scientific">Tetraodon nigroviridis</name>
    <name type="common">Spotted green pufferfish</name>
    <name type="synonym">Chelonodon nigroviridis</name>
    <dbReference type="NCBI Taxonomy" id="99883"/>
    <lineage>
        <taxon>Eukaryota</taxon>
        <taxon>Metazoa</taxon>
        <taxon>Chordata</taxon>
        <taxon>Craniata</taxon>
        <taxon>Vertebrata</taxon>
        <taxon>Euteleostomi</taxon>
        <taxon>Actinopterygii</taxon>
        <taxon>Neopterygii</taxon>
        <taxon>Teleostei</taxon>
        <taxon>Neoteleostei</taxon>
        <taxon>Acanthomorphata</taxon>
        <taxon>Eupercaria</taxon>
        <taxon>Tetraodontiformes</taxon>
        <taxon>Tetradontoidea</taxon>
        <taxon>Tetraodontidae</taxon>
        <taxon>Tetraodon</taxon>
    </lineage>
</organism>